<sequence length="13" mass="1643">QKNDKKDRFYGLM</sequence>
<comment type="subcellular location">
    <subcellularLocation>
        <location evidence="2">Secreted</location>
    </subcellularLocation>
</comment>
<comment type="tissue specificity">
    <text evidence="2">Expressed by the venom gland.</text>
</comment>
<comment type="mass spectrometry" mass="1623.92" method="Electrospray" evidence="2"/>
<comment type="similarity">
    <text evidence="1">Belongs to the tachykinin family.</text>
</comment>
<organism>
    <name type="scientific">Phoneutria nigriventer</name>
    <name type="common">Brazilian armed spider</name>
    <name type="synonym">Ctenus nigriventer</name>
    <dbReference type="NCBI Taxonomy" id="6918"/>
    <lineage>
        <taxon>Eukaryota</taxon>
        <taxon>Metazoa</taxon>
        <taxon>Ecdysozoa</taxon>
        <taxon>Arthropoda</taxon>
        <taxon>Chelicerata</taxon>
        <taxon>Arachnida</taxon>
        <taxon>Araneae</taxon>
        <taxon>Araneomorphae</taxon>
        <taxon>Entelegynae</taxon>
        <taxon>Lycosoidea</taxon>
        <taxon>Ctenidae</taxon>
        <taxon>Phoneutria</taxon>
    </lineage>
</organism>
<keyword id="KW-0027">Amidation</keyword>
<keyword id="KW-0903">Direct protein sequencing</keyword>
<keyword id="KW-0873">Pyrrolidone carboxylic acid</keyword>
<keyword id="KW-0964">Secreted</keyword>
<dbReference type="GO" id="GO:0005576">
    <property type="term" value="C:extracellular region"/>
    <property type="evidence" value="ECO:0000314"/>
    <property type="project" value="UniProtKB"/>
</dbReference>
<dbReference type="InterPro" id="IPR013055">
    <property type="entry name" value="Tachy_Neuro_lke_CS"/>
</dbReference>
<dbReference type="PROSITE" id="PS00267">
    <property type="entry name" value="TACHYKININ"/>
    <property type="match status" value="1"/>
</dbReference>
<proteinExistence type="evidence at protein level"/>
<feature type="peptide" id="PRO_0000402821" description="Tachykinin-like peptide-XI" evidence="2">
    <location>
        <begin position="1"/>
        <end position="13"/>
    </location>
</feature>
<feature type="modified residue" description="Pyrrolidone carboxylic acid" evidence="2">
    <location>
        <position position="1"/>
    </location>
</feature>
<feature type="modified residue" description="Methionine amide" evidence="2">
    <location>
        <position position="13"/>
    </location>
</feature>
<accession>P86308</accession>
<reference evidence="4" key="1">
    <citation type="journal article" date="2005" name="Rapid Commun. Mass Spectrom.">
        <title>Electrospray ionization quadrupole time-of-flight and matrix-assisted laser desorption/ionization tandem time-of-flight mass spectrometric analyses to solve micro-heterogeneity in post-translationally modified peptides from Phoneutria nigriventer (Aranea, Ctenidae) venom.</title>
        <authorList>
            <person name="Pimenta A.M.C."/>
            <person name="Rates B."/>
            <person name="Bloch C. Jr."/>
            <person name="Gomes P.C."/>
            <person name="Santoro M.M."/>
            <person name="de Lima M.E."/>
            <person name="Richardson M."/>
            <person name="Cordeiro M.N."/>
        </authorList>
    </citation>
    <scope>PROTEIN SEQUENCE</scope>
    <scope>SUBCELLULAR LOCATION</scope>
    <scope>TISSUE SPECIFICITY</scope>
    <scope>MASS SPECTROMETRY</scope>
    <scope>PYROGLUTAMATE FORMATION AT GLN-1</scope>
    <scope>AMIDATION AT MET-13</scope>
    <source>
        <tissue evidence="2">Venom</tissue>
    </source>
</reference>
<evidence type="ECO:0000255" key="1"/>
<evidence type="ECO:0000269" key="2">
    <source>
    </source>
</evidence>
<evidence type="ECO:0000303" key="3">
    <source>
    </source>
</evidence>
<evidence type="ECO:0000305" key="4"/>
<evidence type="ECO:0000305" key="5">
    <source>
    </source>
</evidence>
<protein>
    <recommendedName>
        <fullName evidence="5">Tachykinin-like peptide-XI</fullName>
    </recommendedName>
    <alternativeName>
        <fullName evidence="3">P.nigriventer tachykinin peptides XI</fullName>
        <shortName evidence="3">PnTkP-XI</shortName>
    </alternativeName>
    <alternativeName>
        <fullName evidence="4">U29-ctenitoxin-Pn1k</fullName>
        <shortName evidence="4">U29-CNTX-Pn1k</shortName>
    </alternativeName>
</protein>
<name>TLP11_PHONI</name>